<organism>
    <name type="scientific">Clostridium botulinum (strain Langeland / NCTC 10281 / Type F)</name>
    <dbReference type="NCBI Taxonomy" id="441772"/>
    <lineage>
        <taxon>Bacteria</taxon>
        <taxon>Bacillati</taxon>
        <taxon>Bacillota</taxon>
        <taxon>Clostridia</taxon>
        <taxon>Eubacteriales</taxon>
        <taxon>Clostridiaceae</taxon>
        <taxon>Clostridium</taxon>
    </lineage>
</organism>
<dbReference type="EC" id="2.7.7.6" evidence="1"/>
<dbReference type="EMBL" id="CP000728">
    <property type="protein sequence ID" value="ABS40506.1"/>
    <property type="molecule type" value="Genomic_DNA"/>
</dbReference>
<dbReference type="RefSeq" id="WP_012101135.1">
    <property type="nucleotide sequence ID" value="NC_009699.1"/>
</dbReference>
<dbReference type="SMR" id="A7GJ82"/>
<dbReference type="KEGG" id="cbf:CLI_3671"/>
<dbReference type="HOGENOM" id="CLU_000524_4_1_9"/>
<dbReference type="Proteomes" id="UP000002410">
    <property type="component" value="Chromosome"/>
</dbReference>
<dbReference type="GO" id="GO:0000428">
    <property type="term" value="C:DNA-directed RNA polymerase complex"/>
    <property type="evidence" value="ECO:0007669"/>
    <property type="project" value="UniProtKB-KW"/>
</dbReference>
<dbReference type="GO" id="GO:0003677">
    <property type="term" value="F:DNA binding"/>
    <property type="evidence" value="ECO:0007669"/>
    <property type="project" value="UniProtKB-UniRule"/>
</dbReference>
<dbReference type="GO" id="GO:0003899">
    <property type="term" value="F:DNA-directed RNA polymerase activity"/>
    <property type="evidence" value="ECO:0007669"/>
    <property type="project" value="UniProtKB-UniRule"/>
</dbReference>
<dbReference type="GO" id="GO:0032549">
    <property type="term" value="F:ribonucleoside binding"/>
    <property type="evidence" value="ECO:0007669"/>
    <property type="project" value="InterPro"/>
</dbReference>
<dbReference type="GO" id="GO:0006351">
    <property type="term" value="P:DNA-templated transcription"/>
    <property type="evidence" value="ECO:0007669"/>
    <property type="project" value="UniProtKB-UniRule"/>
</dbReference>
<dbReference type="CDD" id="cd00653">
    <property type="entry name" value="RNA_pol_B_RPB2"/>
    <property type="match status" value="1"/>
</dbReference>
<dbReference type="FunFam" id="3.90.1800.10:FF:000001">
    <property type="entry name" value="DNA-directed RNA polymerase subunit beta"/>
    <property type="match status" value="1"/>
</dbReference>
<dbReference type="Gene3D" id="2.40.50.100">
    <property type="match status" value="1"/>
</dbReference>
<dbReference type="Gene3D" id="2.40.50.150">
    <property type="match status" value="1"/>
</dbReference>
<dbReference type="Gene3D" id="3.90.1100.10">
    <property type="match status" value="1"/>
</dbReference>
<dbReference type="Gene3D" id="2.30.150.10">
    <property type="entry name" value="DNA-directed RNA polymerase, beta subunit, external 1 domain"/>
    <property type="match status" value="1"/>
</dbReference>
<dbReference type="Gene3D" id="2.40.270.10">
    <property type="entry name" value="DNA-directed RNA polymerase, subunit 2, domain 6"/>
    <property type="match status" value="1"/>
</dbReference>
<dbReference type="Gene3D" id="3.90.1800.10">
    <property type="entry name" value="RNA polymerase alpha subunit dimerisation domain"/>
    <property type="match status" value="1"/>
</dbReference>
<dbReference type="Gene3D" id="3.90.1110.10">
    <property type="entry name" value="RNA polymerase Rpb2, domain 2"/>
    <property type="match status" value="1"/>
</dbReference>
<dbReference type="HAMAP" id="MF_01321">
    <property type="entry name" value="RNApol_bact_RpoB"/>
    <property type="match status" value="1"/>
</dbReference>
<dbReference type="InterPro" id="IPR042107">
    <property type="entry name" value="DNA-dir_RNA_pol_bsu_ext_1_sf"/>
</dbReference>
<dbReference type="InterPro" id="IPR019462">
    <property type="entry name" value="DNA-dir_RNA_pol_bsu_external_1"/>
</dbReference>
<dbReference type="InterPro" id="IPR015712">
    <property type="entry name" value="DNA-dir_RNA_pol_su2"/>
</dbReference>
<dbReference type="InterPro" id="IPR007120">
    <property type="entry name" value="DNA-dir_RNAP_su2_dom"/>
</dbReference>
<dbReference type="InterPro" id="IPR037033">
    <property type="entry name" value="DNA-dir_RNAP_su2_hyb_sf"/>
</dbReference>
<dbReference type="InterPro" id="IPR010243">
    <property type="entry name" value="RNA_pol_bsu_bac"/>
</dbReference>
<dbReference type="InterPro" id="IPR007121">
    <property type="entry name" value="RNA_pol_bsu_CS"/>
</dbReference>
<dbReference type="InterPro" id="IPR007644">
    <property type="entry name" value="RNA_pol_bsu_protrusion"/>
</dbReference>
<dbReference type="InterPro" id="IPR007642">
    <property type="entry name" value="RNA_pol_Rpb2_2"/>
</dbReference>
<dbReference type="InterPro" id="IPR037034">
    <property type="entry name" value="RNA_pol_Rpb2_2_sf"/>
</dbReference>
<dbReference type="InterPro" id="IPR007645">
    <property type="entry name" value="RNA_pol_Rpb2_3"/>
</dbReference>
<dbReference type="InterPro" id="IPR007641">
    <property type="entry name" value="RNA_pol_Rpb2_7"/>
</dbReference>
<dbReference type="InterPro" id="IPR014724">
    <property type="entry name" value="RNA_pol_RPB2_OB-fold"/>
</dbReference>
<dbReference type="NCBIfam" id="NF001616">
    <property type="entry name" value="PRK00405.1"/>
    <property type="match status" value="1"/>
</dbReference>
<dbReference type="NCBIfam" id="TIGR02013">
    <property type="entry name" value="rpoB"/>
    <property type="match status" value="1"/>
</dbReference>
<dbReference type="PANTHER" id="PTHR20856">
    <property type="entry name" value="DNA-DIRECTED RNA POLYMERASE I SUBUNIT 2"/>
    <property type="match status" value="1"/>
</dbReference>
<dbReference type="Pfam" id="PF04563">
    <property type="entry name" value="RNA_pol_Rpb2_1"/>
    <property type="match status" value="1"/>
</dbReference>
<dbReference type="Pfam" id="PF04561">
    <property type="entry name" value="RNA_pol_Rpb2_2"/>
    <property type="match status" value="2"/>
</dbReference>
<dbReference type="Pfam" id="PF04565">
    <property type="entry name" value="RNA_pol_Rpb2_3"/>
    <property type="match status" value="1"/>
</dbReference>
<dbReference type="Pfam" id="PF10385">
    <property type="entry name" value="RNA_pol_Rpb2_45"/>
    <property type="match status" value="1"/>
</dbReference>
<dbReference type="Pfam" id="PF00562">
    <property type="entry name" value="RNA_pol_Rpb2_6"/>
    <property type="match status" value="1"/>
</dbReference>
<dbReference type="Pfam" id="PF04560">
    <property type="entry name" value="RNA_pol_Rpb2_7"/>
    <property type="match status" value="1"/>
</dbReference>
<dbReference type="SUPFAM" id="SSF64484">
    <property type="entry name" value="beta and beta-prime subunits of DNA dependent RNA-polymerase"/>
    <property type="match status" value="1"/>
</dbReference>
<dbReference type="PROSITE" id="PS01166">
    <property type="entry name" value="RNA_POL_BETA"/>
    <property type="match status" value="1"/>
</dbReference>
<reference key="1">
    <citation type="submission" date="2007-06" db="EMBL/GenBank/DDBJ databases">
        <authorList>
            <person name="Brinkac L.M."/>
            <person name="Daugherty S."/>
            <person name="Dodson R.J."/>
            <person name="Madupu R."/>
            <person name="Brown J.L."/>
            <person name="Bruce D."/>
            <person name="Detter C."/>
            <person name="Munk C."/>
            <person name="Smith L.A."/>
            <person name="Smith T.J."/>
            <person name="White O."/>
            <person name="Brettin T.S."/>
        </authorList>
    </citation>
    <scope>NUCLEOTIDE SEQUENCE [LARGE SCALE GENOMIC DNA]</scope>
    <source>
        <strain>Langeland / NCTC 10281 / Type F</strain>
    </source>
</reference>
<keyword id="KW-0240">DNA-directed RNA polymerase</keyword>
<keyword id="KW-0548">Nucleotidyltransferase</keyword>
<keyword id="KW-0804">Transcription</keyword>
<keyword id="KW-0808">Transferase</keyword>
<accession>A7GJ82</accession>
<sequence length="1234" mass="139177">MVHPVQVGKRTRMSFSRLKEVGQMPNLIEVQLDSYDWFLKEGLQEVFDDINPIQDYTGNLNLEFVGYKLDLDSIKYSVEECKERDSTYAAPLKVKVRLLNKETGEIKEQEVFMGDFPLMTEQGTFIINGAERVIVSQLVRSPGVYYDMTVDKTGSKLFSATVIPNRGAWLEYETDSNNIIYVRIDKTRKLPITILARALGYGTDAEIIEFFGEDERLKATIEKDNTKTREEALLEIYKRLRPGEPPTVDSAESLIESLFFDAKRYDLSRVGRYKFNKKLAIHLRITNQIADQDIVNPQTGEILVQKGEKIDKDKAIEIQNCGINEVYIKIDDKSFKVIGNHFVDIHSLVPFDISDLNIKEYVFYPVLKEILDNYADEESIKEEIRKNIYRLIPKHIIREDIYATINYELGLSYDIGYKDDIDHLGNRRLRSVGELLQNQFRIGLSRMERVVKERMTIQDQEVITPQALINIRPVAASIKEFFGSSQLSQFMDQTNPLSELTHKRRLSALGPGGLSRERAGFEVRDVHHSHYGRMCPIETPEGPNIGLINSLATFAKVNEYGFIETPYRRIDPKNKRATNDIVYMTADEEDLYVIARSDEPIDENGYFIDDKVTVRAKEEVLVVPVSEVEYMDISPRQLVSVATAMIPFLENDDASRALMGSNMQRQAVPLLKPQAPIVGTGIEYKAATDSGVLPKAKNAGTVVYVSADEIRVRRDSDGGIDKYKLLKFKRSNQGTCINQRPIVSKGEVVAKETLLADGPSTDLGEIALGKNILMGFITWEGYNYEDAMLISEQLVKEDVFTSIHIEEYEAEARDTKLGPEEITRDIPNVGEEALKDIDERGIIRIGAEVRSGDILVGKVTPKGETELTAEERLLRAIFGEKAREVRDTSLRVPHGEAGIIVDVKIFTRENGDELPPGVNKLVRCYIAQKRKISVGDKMAGRHGNKGVISRVLPEEDMPFLPDGRPLQICLNPLGVPSRMNIGQVLEVHLGLAASKLGWHIATPVFDGAIESDIVDCLRKAGYSEDGKTVLYDGRTGEPFDNRVTVGYMYILKLAHLVDDKIHARSTGPYSLVTQQPLGGKAQFGGQRFGEMEVWALEAYGAAHTLQEILTVKSDDVVGRVKTYEAIVKGENIPEPGVPESFKVLIKELQALCLDVKVLNDDNQEIKLKESVDEDADELEVNIEGTENQPEEKEEKEEEKEDSDEYDDLREEDVEPDLEELSLDDLDLDDFGDEH</sequence>
<protein>
    <recommendedName>
        <fullName evidence="1">DNA-directed RNA polymerase subunit beta</fullName>
        <shortName evidence="1">RNAP subunit beta</shortName>
        <ecNumber evidence="1">2.7.7.6</ecNumber>
    </recommendedName>
    <alternativeName>
        <fullName evidence="1">RNA polymerase subunit beta</fullName>
    </alternativeName>
    <alternativeName>
        <fullName evidence="1">Transcriptase subunit beta</fullName>
    </alternativeName>
</protein>
<feature type="chain" id="PRO_1000051969" description="DNA-directed RNA polymerase subunit beta">
    <location>
        <begin position="1"/>
        <end position="1234"/>
    </location>
</feature>
<feature type="region of interest" description="Disordered" evidence="2">
    <location>
        <begin position="1169"/>
        <end position="1234"/>
    </location>
</feature>
<feature type="compositionally biased region" description="Acidic residues" evidence="2">
    <location>
        <begin position="1171"/>
        <end position="1180"/>
    </location>
</feature>
<feature type="compositionally biased region" description="Acidic residues" evidence="2">
    <location>
        <begin position="1191"/>
        <end position="1234"/>
    </location>
</feature>
<name>RPOB_CLOBL</name>
<gene>
    <name evidence="1" type="primary">rpoB</name>
    <name type="ordered locus">CLI_3671</name>
</gene>
<evidence type="ECO:0000255" key="1">
    <source>
        <dbReference type="HAMAP-Rule" id="MF_01321"/>
    </source>
</evidence>
<evidence type="ECO:0000256" key="2">
    <source>
        <dbReference type="SAM" id="MobiDB-lite"/>
    </source>
</evidence>
<comment type="function">
    <text evidence="1">DNA-dependent RNA polymerase catalyzes the transcription of DNA into RNA using the four ribonucleoside triphosphates as substrates.</text>
</comment>
<comment type="catalytic activity">
    <reaction evidence="1">
        <text>RNA(n) + a ribonucleoside 5'-triphosphate = RNA(n+1) + diphosphate</text>
        <dbReference type="Rhea" id="RHEA:21248"/>
        <dbReference type="Rhea" id="RHEA-COMP:14527"/>
        <dbReference type="Rhea" id="RHEA-COMP:17342"/>
        <dbReference type="ChEBI" id="CHEBI:33019"/>
        <dbReference type="ChEBI" id="CHEBI:61557"/>
        <dbReference type="ChEBI" id="CHEBI:140395"/>
        <dbReference type="EC" id="2.7.7.6"/>
    </reaction>
</comment>
<comment type="subunit">
    <text evidence="1">The RNAP catalytic core consists of 2 alpha, 1 beta, 1 beta' and 1 omega subunit. When a sigma factor is associated with the core the holoenzyme is formed, which can initiate transcription.</text>
</comment>
<comment type="similarity">
    <text evidence="1">Belongs to the RNA polymerase beta chain family.</text>
</comment>
<proteinExistence type="inferred from homology"/>